<accession>B4EU79</accession>
<proteinExistence type="inferred from homology"/>
<name>RECR_PROMH</name>
<reference key="1">
    <citation type="journal article" date="2008" name="J. Bacteriol.">
        <title>Complete genome sequence of uropathogenic Proteus mirabilis, a master of both adherence and motility.</title>
        <authorList>
            <person name="Pearson M.M."/>
            <person name="Sebaihia M."/>
            <person name="Churcher C."/>
            <person name="Quail M.A."/>
            <person name="Seshasayee A.S."/>
            <person name="Luscombe N.M."/>
            <person name="Abdellah Z."/>
            <person name="Arrosmith C."/>
            <person name="Atkin B."/>
            <person name="Chillingworth T."/>
            <person name="Hauser H."/>
            <person name="Jagels K."/>
            <person name="Moule S."/>
            <person name="Mungall K."/>
            <person name="Norbertczak H."/>
            <person name="Rabbinowitsch E."/>
            <person name="Walker D."/>
            <person name="Whithead S."/>
            <person name="Thomson N.R."/>
            <person name="Rather P.N."/>
            <person name="Parkhill J."/>
            <person name="Mobley H.L.T."/>
        </authorList>
    </citation>
    <scope>NUCLEOTIDE SEQUENCE [LARGE SCALE GENOMIC DNA]</scope>
    <source>
        <strain>HI4320</strain>
    </source>
</reference>
<gene>
    <name evidence="1" type="primary">recR</name>
    <name type="ordered locus">PMI0141</name>
</gene>
<protein>
    <recommendedName>
        <fullName evidence="1">Recombination protein RecR</fullName>
    </recommendedName>
</protein>
<sequence length="201" mass="21909">MQTSPLLESLMEALRCLPGVGPKSAQRMAFHLLQRDRSGGMRLAQALTRAMSEIGHCCDCRTFTEEERCTICANARRQQNGQICVVESPADIHAIEQTGQFAGRYFVLMGHLSPLDGIGPMDIGLDRLEERLSQEPISEVILATNPTVEGEATANYIAEICAQYDIAASRIAHGVPVGGELEMVDGTTLSHSIAGRQKIHY</sequence>
<evidence type="ECO:0000255" key="1">
    <source>
        <dbReference type="HAMAP-Rule" id="MF_00017"/>
    </source>
</evidence>
<comment type="function">
    <text evidence="1">May play a role in DNA repair. It seems to be involved in an RecBC-independent recombinational process of DNA repair. It may act with RecF and RecO.</text>
</comment>
<comment type="similarity">
    <text evidence="1">Belongs to the RecR family.</text>
</comment>
<organism>
    <name type="scientific">Proteus mirabilis (strain HI4320)</name>
    <dbReference type="NCBI Taxonomy" id="529507"/>
    <lineage>
        <taxon>Bacteria</taxon>
        <taxon>Pseudomonadati</taxon>
        <taxon>Pseudomonadota</taxon>
        <taxon>Gammaproteobacteria</taxon>
        <taxon>Enterobacterales</taxon>
        <taxon>Morganellaceae</taxon>
        <taxon>Proteus</taxon>
    </lineage>
</organism>
<dbReference type="EMBL" id="AM942759">
    <property type="protein sequence ID" value="CAR40459.1"/>
    <property type="molecule type" value="Genomic_DNA"/>
</dbReference>
<dbReference type="RefSeq" id="WP_004245059.1">
    <property type="nucleotide sequence ID" value="NC_010554.1"/>
</dbReference>
<dbReference type="SMR" id="B4EU79"/>
<dbReference type="EnsemblBacteria" id="CAR40459">
    <property type="protein sequence ID" value="CAR40459"/>
    <property type="gene ID" value="PMI0141"/>
</dbReference>
<dbReference type="GeneID" id="6800464"/>
<dbReference type="KEGG" id="pmr:PMI0141"/>
<dbReference type="eggNOG" id="COG0353">
    <property type="taxonomic scope" value="Bacteria"/>
</dbReference>
<dbReference type="HOGENOM" id="CLU_060739_1_2_6"/>
<dbReference type="Proteomes" id="UP000008319">
    <property type="component" value="Chromosome"/>
</dbReference>
<dbReference type="GO" id="GO:0003677">
    <property type="term" value="F:DNA binding"/>
    <property type="evidence" value="ECO:0007669"/>
    <property type="project" value="UniProtKB-UniRule"/>
</dbReference>
<dbReference type="GO" id="GO:0008270">
    <property type="term" value="F:zinc ion binding"/>
    <property type="evidence" value="ECO:0007669"/>
    <property type="project" value="UniProtKB-KW"/>
</dbReference>
<dbReference type="GO" id="GO:0006310">
    <property type="term" value="P:DNA recombination"/>
    <property type="evidence" value="ECO:0007669"/>
    <property type="project" value="UniProtKB-UniRule"/>
</dbReference>
<dbReference type="GO" id="GO:0006281">
    <property type="term" value="P:DNA repair"/>
    <property type="evidence" value="ECO:0007669"/>
    <property type="project" value="UniProtKB-UniRule"/>
</dbReference>
<dbReference type="CDD" id="cd01025">
    <property type="entry name" value="TOPRIM_recR"/>
    <property type="match status" value="1"/>
</dbReference>
<dbReference type="FunFam" id="1.10.8.420:FF:000001">
    <property type="entry name" value="Recombination protein RecR"/>
    <property type="match status" value="1"/>
</dbReference>
<dbReference type="FunFam" id="3.40.1360.10:FF:000001">
    <property type="entry name" value="Recombination protein RecR"/>
    <property type="match status" value="1"/>
</dbReference>
<dbReference type="Gene3D" id="3.40.1360.10">
    <property type="match status" value="1"/>
</dbReference>
<dbReference type="Gene3D" id="6.10.250.240">
    <property type="match status" value="1"/>
</dbReference>
<dbReference type="Gene3D" id="1.10.8.420">
    <property type="entry name" value="RecR Domain 1"/>
    <property type="match status" value="1"/>
</dbReference>
<dbReference type="HAMAP" id="MF_00017">
    <property type="entry name" value="RecR"/>
    <property type="match status" value="1"/>
</dbReference>
<dbReference type="InterPro" id="IPR000093">
    <property type="entry name" value="DNA_Rcmb_RecR"/>
</dbReference>
<dbReference type="InterPro" id="IPR023627">
    <property type="entry name" value="Rcmb_RecR"/>
</dbReference>
<dbReference type="InterPro" id="IPR015967">
    <property type="entry name" value="Rcmb_RecR_Znf"/>
</dbReference>
<dbReference type="InterPro" id="IPR006171">
    <property type="entry name" value="TOPRIM_dom"/>
</dbReference>
<dbReference type="InterPro" id="IPR034137">
    <property type="entry name" value="TOPRIM_RecR"/>
</dbReference>
<dbReference type="NCBIfam" id="TIGR00615">
    <property type="entry name" value="recR"/>
    <property type="match status" value="1"/>
</dbReference>
<dbReference type="PANTHER" id="PTHR30446">
    <property type="entry name" value="RECOMBINATION PROTEIN RECR"/>
    <property type="match status" value="1"/>
</dbReference>
<dbReference type="PANTHER" id="PTHR30446:SF0">
    <property type="entry name" value="RECOMBINATION PROTEIN RECR"/>
    <property type="match status" value="1"/>
</dbReference>
<dbReference type="Pfam" id="PF21175">
    <property type="entry name" value="RecR_C"/>
    <property type="match status" value="1"/>
</dbReference>
<dbReference type="Pfam" id="PF21176">
    <property type="entry name" value="RecR_HhH"/>
    <property type="match status" value="1"/>
</dbReference>
<dbReference type="Pfam" id="PF13662">
    <property type="entry name" value="Toprim_4"/>
    <property type="match status" value="1"/>
</dbReference>
<dbReference type="SMART" id="SM00493">
    <property type="entry name" value="TOPRIM"/>
    <property type="match status" value="1"/>
</dbReference>
<dbReference type="SUPFAM" id="SSF111304">
    <property type="entry name" value="Recombination protein RecR"/>
    <property type="match status" value="1"/>
</dbReference>
<dbReference type="PROSITE" id="PS01300">
    <property type="entry name" value="RECR"/>
    <property type="match status" value="1"/>
</dbReference>
<dbReference type="PROSITE" id="PS50880">
    <property type="entry name" value="TOPRIM"/>
    <property type="match status" value="1"/>
</dbReference>
<keyword id="KW-0227">DNA damage</keyword>
<keyword id="KW-0233">DNA recombination</keyword>
<keyword id="KW-0234">DNA repair</keyword>
<keyword id="KW-0479">Metal-binding</keyword>
<keyword id="KW-1185">Reference proteome</keyword>
<keyword id="KW-0862">Zinc</keyword>
<keyword id="KW-0863">Zinc-finger</keyword>
<feature type="chain" id="PRO_1000089757" description="Recombination protein RecR">
    <location>
        <begin position="1"/>
        <end position="201"/>
    </location>
</feature>
<feature type="domain" description="Toprim" evidence="1">
    <location>
        <begin position="81"/>
        <end position="176"/>
    </location>
</feature>
<feature type="zinc finger region" description="C4-type" evidence="1">
    <location>
        <begin position="57"/>
        <end position="72"/>
    </location>
</feature>